<gene>
    <name type="primary">pdsA</name>
    <name type="ORF">NFIA_101360</name>
</gene>
<name>PDSA_NEOFI</name>
<dbReference type="EC" id="5.4.99.32"/>
<dbReference type="EMBL" id="DS027685">
    <property type="protein sequence ID" value="EAW24652.1"/>
    <property type="molecule type" value="Genomic_DNA"/>
</dbReference>
<dbReference type="RefSeq" id="XP_001266549.1">
    <property type="nucleotide sequence ID" value="XM_001266548.1"/>
</dbReference>
<dbReference type="SMR" id="A1CVK0"/>
<dbReference type="STRING" id="331117.A1CVK0"/>
<dbReference type="EnsemblFungi" id="EAW24652">
    <property type="protein sequence ID" value="EAW24652"/>
    <property type="gene ID" value="NFIA_101360"/>
</dbReference>
<dbReference type="GeneID" id="4594041"/>
<dbReference type="KEGG" id="nfi:NFIA_101360"/>
<dbReference type="VEuPathDB" id="FungiDB:NFIA_101360"/>
<dbReference type="eggNOG" id="KOG0497">
    <property type="taxonomic scope" value="Eukaryota"/>
</dbReference>
<dbReference type="HOGENOM" id="CLU_009074_2_1_1"/>
<dbReference type="OMA" id="CYDDSTC"/>
<dbReference type="OrthoDB" id="21502at2759"/>
<dbReference type="Proteomes" id="UP000006702">
    <property type="component" value="Unassembled WGS sequence"/>
</dbReference>
<dbReference type="GO" id="GO:0005811">
    <property type="term" value="C:lipid droplet"/>
    <property type="evidence" value="ECO:0007669"/>
    <property type="project" value="InterPro"/>
</dbReference>
<dbReference type="GO" id="GO:0000250">
    <property type="term" value="F:lanosterol synthase activity"/>
    <property type="evidence" value="ECO:0007669"/>
    <property type="project" value="TreeGrafter"/>
</dbReference>
<dbReference type="GO" id="GO:0006696">
    <property type="term" value="P:ergosterol biosynthetic process"/>
    <property type="evidence" value="ECO:0007669"/>
    <property type="project" value="TreeGrafter"/>
</dbReference>
<dbReference type="GO" id="GO:0016104">
    <property type="term" value="P:triterpenoid biosynthetic process"/>
    <property type="evidence" value="ECO:0007669"/>
    <property type="project" value="InterPro"/>
</dbReference>
<dbReference type="CDD" id="cd02892">
    <property type="entry name" value="SQCY_1"/>
    <property type="match status" value="1"/>
</dbReference>
<dbReference type="FunFam" id="1.50.10.20:FF:000002">
    <property type="entry name" value="Terpene cyclase/mutase family member"/>
    <property type="match status" value="1"/>
</dbReference>
<dbReference type="FunFam" id="1.50.10.20:FF:000003">
    <property type="entry name" value="Terpene cyclase/mutase family member"/>
    <property type="match status" value="1"/>
</dbReference>
<dbReference type="Gene3D" id="1.50.10.20">
    <property type="match status" value="2"/>
</dbReference>
<dbReference type="Gene3D" id="6.20.120.20">
    <property type="match status" value="1"/>
</dbReference>
<dbReference type="InterPro" id="IPR032696">
    <property type="entry name" value="SQ_cyclase_C"/>
</dbReference>
<dbReference type="InterPro" id="IPR032697">
    <property type="entry name" value="SQ_cyclase_N"/>
</dbReference>
<dbReference type="InterPro" id="IPR018333">
    <property type="entry name" value="Squalene_cyclase"/>
</dbReference>
<dbReference type="InterPro" id="IPR008930">
    <property type="entry name" value="Terpenoid_cyclase/PrenylTrfase"/>
</dbReference>
<dbReference type="NCBIfam" id="TIGR01787">
    <property type="entry name" value="squalene_cyclas"/>
    <property type="match status" value="1"/>
</dbReference>
<dbReference type="PANTHER" id="PTHR11764:SF20">
    <property type="entry name" value="LANOSTEROL SYNTHASE"/>
    <property type="match status" value="1"/>
</dbReference>
<dbReference type="PANTHER" id="PTHR11764">
    <property type="entry name" value="TERPENE CYCLASE/MUTASE FAMILY MEMBER"/>
    <property type="match status" value="1"/>
</dbReference>
<dbReference type="Pfam" id="PF13243">
    <property type="entry name" value="SQHop_cyclase_C"/>
    <property type="match status" value="1"/>
</dbReference>
<dbReference type="Pfam" id="PF13249">
    <property type="entry name" value="SQHop_cyclase_N"/>
    <property type="match status" value="1"/>
</dbReference>
<dbReference type="SFLD" id="SFLDG01016">
    <property type="entry name" value="Prenyltransferase_Like_2"/>
    <property type="match status" value="1"/>
</dbReference>
<dbReference type="SUPFAM" id="SSF48239">
    <property type="entry name" value="Terpenoid cyclases/Protein prenyltransferases"/>
    <property type="match status" value="2"/>
</dbReference>
<comment type="function">
    <text evidence="1">Protostadienol synthase which cyclizes (3S)-oxidosqualene to (17Z)-protosta-17(20),24-dien-3-beta-ol (protostadienol), the biosynthetic precursor of helvolic acid, a secondary metabolite which promotes virulence.</text>
</comment>
<comment type="catalytic activity">
    <reaction>
        <text>(S)-2,3-epoxysqualene = (17Z)-protosta-17(20),24-dien-3beta-ol</text>
        <dbReference type="Rhea" id="RHEA:30987"/>
        <dbReference type="ChEBI" id="CHEBI:15441"/>
        <dbReference type="ChEBI" id="CHEBI:62457"/>
        <dbReference type="EC" id="5.4.99.32"/>
    </reaction>
</comment>
<comment type="similarity">
    <text evidence="3">Belongs to the terpene cyclase/mutase family.</text>
</comment>
<proteinExistence type="inferred from homology"/>
<accession>A1CVK0</accession>
<reference key="1">
    <citation type="journal article" date="2008" name="PLoS Genet.">
        <title>Genomic islands in the pathogenic filamentous fungus Aspergillus fumigatus.</title>
        <authorList>
            <person name="Fedorova N.D."/>
            <person name="Khaldi N."/>
            <person name="Joardar V.S."/>
            <person name="Maiti R."/>
            <person name="Amedeo P."/>
            <person name="Anderson M.J."/>
            <person name="Crabtree J."/>
            <person name="Silva J.C."/>
            <person name="Badger J.H."/>
            <person name="Albarraq A."/>
            <person name="Angiuoli S."/>
            <person name="Bussey H."/>
            <person name="Bowyer P."/>
            <person name="Cotty P.J."/>
            <person name="Dyer P.S."/>
            <person name="Egan A."/>
            <person name="Galens K."/>
            <person name="Fraser-Liggett C.M."/>
            <person name="Haas B.J."/>
            <person name="Inman J.M."/>
            <person name="Kent R."/>
            <person name="Lemieux S."/>
            <person name="Malavazi I."/>
            <person name="Orvis J."/>
            <person name="Roemer T."/>
            <person name="Ronning C.M."/>
            <person name="Sundaram J.P."/>
            <person name="Sutton G."/>
            <person name="Turner G."/>
            <person name="Venter J.C."/>
            <person name="White O.R."/>
            <person name="Whitty B.R."/>
            <person name="Youngman P."/>
            <person name="Wolfe K.H."/>
            <person name="Goldman G.H."/>
            <person name="Wortman J.R."/>
            <person name="Jiang B."/>
            <person name="Denning D.W."/>
            <person name="Nierman W.C."/>
        </authorList>
    </citation>
    <scope>NUCLEOTIDE SEQUENCE [LARGE SCALE GENOMIC DNA]</scope>
    <source>
        <strain>ATCC 1020 / DSM 3700 / CBS 544.65 / FGSC A1164 / JCM 1740 / NRRL 181 / WB 181</strain>
    </source>
</reference>
<evidence type="ECO:0000250" key="1"/>
<evidence type="ECO:0000250" key="2">
    <source>
        <dbReference type="UniProtKB" id="P48449"/>
    </source>
</evidence>
<evidence type="ECO:0000305" key="3"/>
<feature type="chain" id="PRO_0000415497" description="Protostadienol synthase A">
    <location>
        <begin position="1"/>
        <end position="738"/>
    </location>
</feature>
<feature type="repeat" description="PFTB 1">
    <location>
        <begin position="132"/>
        <end position="173"/>
    </location>
</feature>
<feature type="repeat" description="PFTB 2">
    <location>
        <begin position="490"/>
        <end position="531"/>
    </location>
</feature>
<feature type="repeat" description="PFTB 3">
    <location>
        <begin position="567"/>
        <end position="607"/>
    </location>
</feature>
<feature type="repeat" description="PFTB 4">
    <location>
        <begin position="616"/>
        <end position="663"/>
    </location>
</feature>
<feature type="active site" description="Proton donor" evidence="2">
    <location>
        <position position="463"/>
    </location>
</feature>
<keyword id="KW-0413">Isomerase</keyword>
<keyword id="KW-0444">Lipid biosynthesis</keyword>
<keyword id="KW-0443">Lipid metabolism</keyword>
<keyword id="KW-1185">Reference proteome</keyword>
<keyword id="KW-0677">Repeat</keyword>
<keyword id="KW-0752">Steroid biosynthesis</keyword>
<keyword id="KW-0843">Virulence</keyword>
<protein>
    <recommendedName>
        <fullName>Protostadienol synthase A</fullName>
        <ecNumber>5.4.99.32</ecNumber>
    </recommendedName>
</protein>
<organism>
    <name type="scientific">Neosartorya fischeri (strain ATCC 1020 / DSM 3700 / CBS 544.65 / FGSC A1164 / JCM 1740 / NRRL 181 / WB 181)</name>
    <name type="common">Aspergillus fischerianus</name>
    <dbReference type="NCBI Taxonomy" id="331117"/>
    <lineage>
        <taxon>Eukaryota</taxon>
        <taxon>Fungi</taxon>
        <taxon>Dikarya</taxon>
        <taxon>Ascomycota</taxon>
        <taxon>Pezizomycotina</taxon>
        <taxon>Eurotiomycetes</taxon>
        <taxon>Eurotiomycetidae</taxon>
        <taxon>Eurotiales</taxon>
        <taxon>Aspergillaceae</taxon>
        <taxon>Aspergillus</taxon>
        <taxon>Aspergillus subgen. Fumigati</taxon>
    </lineage>
</organism>
<sequence>MTTDSSMPATVIGKAEFSNTKAASEFGTNLSRWRLNVDNGRHMWEYLESEDEARKRPQSILEKYWLGLPYELPARPRATRALEAVENGWEFFKRLQTADGHWGCNDDGPLFVTSGMVIARYIVGIPIDSHMKQEMCRYLLNVVNEDGGWGLFIQSPSTVFGTVMNYCMLRILGLGPEHPAMARARNTLHRLGSASATPTWGKFWLCVLGVYEWEGMIPLPPEPLLVPASLPFNPGKWWVHTRNVYISMSYLYGHRFSMPPNKLVQALRDELYDIPYEQINWPAQRTNVSAADRLTDPTWIQRSFTSALTTYETFKIPFLRRRALNEALFQIETETRNTHYLCIAPVSFASNMLALYHAHGRDSHWIRGMRDRFIDPMWLCREGLAASGTNGTSLWDTALTVQATIDAGLAARPENQAILRKALEFIDNSQIREDPLGVHHVYRQPTRGAWPFSTRDQSYAVSDTTAEAVKVVVLLQQIEGFPSRISDERLQQAIDLILGMENAGGGFSAYEPVRGPKFLELLNITELYENVMTDNLYPECTSSVIMSLTTFAREYPTYRARDIQACVSRSVDYLLRSQYPNGGWFASWGVCFTYATMFALQGLACMGRNESNCAACQRACSFLLQHQNPDGGWGESLDTVRFKQYLPHPDGSQVTNTAYAVIGLLAARCGNHEAIRRGVAYLMKEQQDTGEWLPGALEGVFAPPGGMRYPNYKFHFTLMALGRYAAVHGDECLAAQLV</sequence>